<keyword id="KW-0027">Amidation</keyword>
<keyword id="KW-0165">Cleavage on pair of basic residues</keyword>
<keyword id="KW-0903">Direct protein sequencing</keyword>
<keyword id="KW-1015">Disulfide bond</keyword>
<keyword id="KW-0872">Ion channel impairing toxin</keyword>
<keyword id="KW-0960">Knottin</keyword>
<keyword id="KW-0528">Neurotoxin</keyword>
<keyword id="KW-0964">Secreted</keyword>
<keyword id="KW-0732">Signal</keyword>
<keyword id="KW-0800">Toxin</keyword>
<dbReference type="EMBL" id="AY681976">
    <property type="protein sequence ID" value="AAT85611.1"/>
    <property type="molecule type" value="mRNA"/>
</dbReference>
<dbReference type="SMR" id="Q6B4T4"/>
<dbReference type="ArachnoServer" id="AS000251">
    <property type="toxin name" value="U1-sicaritoxin-Li1b"/>
</dbReference>
<dbReference type="GO" id="GO:0005576">
    <property type="term" value="C:extracellular region"/>
    <property type="evidence" value="ECO:0007669"/>
    <property type="project" value="UniProtKB-SubCell"/>
</dbReference>
<dbReference type="GO" id="GO:0099106">
    <property type="term" value="F:ion channel regulator activity"/>
    <property type="evidence" value="ECO:0007669"/>
    <property type="project" value="UniProtKB-KW"/>
</dbReference>
<dbReference type="GO" id="GO:0090729">
    <property type="term" value="F:toxin activity"/>
    <property type="evidence" value="ECO:0007669"/>
    <property type="project" value="UniProtKB-KW"/>
</dbReference>
<protein>
    <recommendedName>
        <fullName>U1-sicaritoxin-Li1b</fullName>
        <shortName>U1-SCRTX-Li1b</shortName>
    </recommendedName>
    <alternativeName>
        <fullName evidence="4">LiTx2</fullName>
    </alternativeName>
</protein>
<feature type="signal peptide" evidence="2">
    <location>
        <begin position="1"/>
        <end position="19"/>
    </location>
</feature>
<feature type="propeptide" id="PRO_0000262658" evidence="3">
    <location>
        <begin position="20"/>
        <end position="36"/>
    </location>
</feature>
<feature type="chain" id="PRO_0000262659" description="U1-sicaritoxin-Li1b">
    <location>
        <begin position="37"/>
        <end position="82"/>
    </location>
</feature>
<feature type="propeptide" id="PRO_0000262660">
    <location>
        <begin position="86"/>
        <end position="105"/>
    </location>
</feature>
<feature type="modified residue" description="Arginine amide" evidence="2">
    <location>
        <position position="82"/>
    </location>
</feature>
<feature type="disulfide bond" evidence="1">
    <location>
        <begin position="38"/>
        <end position="55"/>
    </location>
</feature>
<feature type="disulfide bond" evidence="1">
    <location>
        <begin position="46"/>
        <end position="60"/>
    </location>
</feature>
<feature type="disulfide bond" evidence="1">
    <location>
        <begin position="54"/>
        <end position="73"/>
    </location>
</feature>
<feature type="disulfide bond" evidence="1">
    <location>
        <begin position="62"/>
        <end position="71"/>
    </location>
</feature>
<feature type="sequence conflict" description="In Ref. 1; AA sequence." evidence="5" ref="1">
    <original>C</original>
    <variation>G</variation>
    <location>
        <position position="38"/>
    </location>
</feature>
<feature type="sequence conflict" description="In Ref. 1; AA sequence." evidence="5" ref="1">
    <original>W</original>
    <variation>D</variation>
    <location>
        <position position="53"/>
    </location>
</feature>
<sequence>MKLLFEGLLVLVLIAFVVAEFESDAEKWEALITQERACKGEGVKGCYYEADDWCCKKTPCKCPAWSHERECRCTQPCNPSCRGKRALMVDPETHRMLSLHRLSEE</sequence>
<reference key="1">
    <citation type="journal article" date="2004" name="Toxicon">
        <title>Identification and molecular cloning of insecticidal toxins from the venom of the brown spider Loxosceles intermedia.</title>
        <authorList>
            <person name="de Castro C.S."/>
            <person name="Silvestre F.G."/>
            <person name="Araujo S.C."/>
            <person name="Yazbeck G.M."/>
            <person name="Mangili O.C."/>
            <person name="Cruz I."/>
            <person name="Chavez-Olortegui C."/>
            <person name="Kalapothakis E."/>
        </authorList>
    </citation>
    <scope>NUCLEOTIDE SEQUENCE [MRNA]</scope>
    <scope>PROTEIN SEQUENCE OF 37-53</scope>
    <scope>SUBCELLULAR LOCATION</scope>
    <source>
        <tissue>Venom</tissue>
        <tissue>Venom gland</tissue>
    </source>
</reference>
<evidence type="ECO:0000250" key="1"/>
<evidence type="ECO:0000255" key="2"/>
<evidence type="ECO:0000269" key="3">
    <source>
    </source>
</evidence>
<evidence type="ECO:0000303" key="4">
    <source>
    </source>
</evidence>
<evidence type="ECO:0000305" key="5"/>
<evidence type="ECO:0000305" key="6">
    <source>
    </source>
</evidence>
<organism>
    <name type="scientific">Loxosceles intermedia</name>
    <name type="common">Brown spider</name>
    <dbReference type="NCBI Taxonomy" id="58218"/>
    <lineage>
        <taxon>Eukaryota</taxon>
        <taxon>Metazoa</taxon>
        <taxon>Ecdysozoa</taxon>
        <taxon>Arthropoda</taxon>
        <taxon>Chelicerata</taxon>
        <taxon>Arachnida</taxon>
        <taxon>Araneae</taxon>
        <taxon>Araneomorphae</taxon>
        <taxon>Haplogynae</taxon>
        <taxon>Scytodoidea</taxon>
        <taxon>Sicariidae</taxon>
        <taxon>Loxosceles</taxon>
    </lineage>
</organism>
<name>TX2_LOXIN</name>
<accession>Q6B4T4</accession>
<proteinExistence type="evidence at protein level"/>
<comment type="function">
    <text>Toxin active against insects (S.frugiperda larvae). May act on sodium (Nav) or calcium (Cav) channels.</text>
</comment>
<comment type="subcellular location">
    <subcellularLocation>
        <location evidence="3">Secreted</location>
    </subcellularLocation>
</comment>
<comment type="tissue specificity">
    <text evidence="6">Expressed by the venom gland.</text>
</comment>
<comment type="domain">
    <text evidence="1">The presence of a 'disulfide through disulfide knot' structurally defines this protein as a knottin.</text>
</comment>
<comment type="similarity">
    <text evidence="5">Belongs to the neurotoxin 28 (Litx) family.</text>
</comment>